<sequence>MTTTIQQRSGANGWQSFCEWVTSTNNRLYVGWFGVLMIPTLLAATTCFIVAFIAAPPVDIDGIREPVAGSLIYGNNIISGAVVPSSNAIGLHFYPIWEAASLDEWLYNGGPYQLVVFHFLIGIFCYMGREWELSYRLGMRPWICVAYSAPVAAASAVFLVYPFGQGSFSDGMPLGISGTFNFMLVFQAEHNILMHPFHMMGVAGVFGGSLFSAMHGSLVTSSLVRETTESESQNYGYKFGQEEETYNIVAAHGYFGRLIFQYASFNNSRSLHFFLAAWPVVGIWFTALGVSTMAFNLNGFNFNQSILDGQGRVLNTWADVLNRANLGMEVMHERNAHNFPLDLAAAESTPVALQAPAIG</sequence>
<keyword id="KW-0106">Calcium</keyword>
<keyword id="KW-0148">Chlorophyll</keyword>
<keyword id="KW-0157">Chromophore</keyword>
<keyword id="KW-0249">Electron transport</keyword>
<keyword id="KW-0359">Herbicide resistance</keyword>
<keyword id="KW-0408">Iron</keyword>
<keyword id="KW-0460">Magnesium</keyword>
<keyword id="KW-0464">Manganese</keyword>
<keyword id="KW-0472">Membrane</keyword>
<keyword id="KW-0479">Metal-binding</keyword>
<keyword id="KW-0560">Oxidoreductase</keyword>
<keyword id="KW-0602">Photosynthesis</keyword>
<keyword id="KW-0604">Photosystem II</keyword>
<keyword id="KW-1185">Reference proteome</keyword>
<keyword id="KW-0793">Thylakoid</keyword>
<keyword id="KW-0812">Transmembrane</keyword>
<keyword id="KW-1133">Transmembrane helix</keyword>
<keyword id="KW-0813">Transport</keyword>
<accession>A5GIM7</accession>
<reference key="1">
    <citation type="submission" date="2006-05" db="EMBL/GenBank/DDBJ databases">
        <authorList>
            <consortium name="Genoscope"/>
        </authorList>
    </citation>
    <scope>NUCLEOTIDE SEQUENCE [LARGE SCALE GENOMIC DNA]</scope>
    <source>
        <strain>WH7803</strain>
    </source>
</reference>
<comment type="function">
    <text evidence="1">Photosystem II (PSII) is a light-driven water:plastoquinone oxidoreductase that uses light energy to abstract electrons from H(2)O, generating O(2) and a proton gradient subsequently used for ATP formation. It consists of a core antenna complex that captures photons, and an electron transfer chain that converts photonic excitation into a charge separation. The D1/D2 (PsbA/PsbD) reaction center heterodimer binds P680, the primary electron donor of PSII as well as several subsequent electron acceptors.</text>
</comment>
<comment type="catalytic activity">
    <reaction evidence="1">
        <text>2 a plastoquinone + 4 hnu + 2 H2O = 2 a plastoquinol + O2</text>
        <dbReference type="Rhea" id="RHEA:36359"/>
        <dbReference type="Rhea" id="RHEA-COMP:9561"/>
        <dbReference type="Rhea" id="RHEA-COMP:9562"/>
        <dbReference type="ChEBI" id="CHEBI:15377"/>
        <dbReference type="ChEBI" id="CHEBI:15379"/>
        <dbReference type="ChEBI" id="CHEBI:17757"/>
        <dbReference type="ChEBI" id="CHEBI:30212"/>
        <dbReference type="ChEBI" id="CHEBI:62192"/>
        <dbReference type="EC" id="1.10.3.9"/>
    </reaction>
</comment>
<comment type="cofactor">
    <text evidence="1">The D1/D2 heterodimer binds P680, chlorophylls that are the primary electron donor of PSII, and subsequent electron acceptors. It shares a non-heme iron and each subunit binds pheophytin, quinone, additional chlorophylls, carotenoids and lipids. D1 provides most of the ligands for the Mn4-Ca-O5 cluster of the oxygen-evolving complex (OEC). There is also a Cl(-1) ion associated with D1 and D2, which is required for oxygen evolution. The PSII complex binds additional chlorophylls, carotenoids and specific lipids.</text>
</comment>
<comment type="subunit">
    <text evidence="1">PSII is composed of 1 copy each of membrane proteins PsbA, PsbB, PsbC, PsbD, PsbE, PsbF, PsbH, PsbI, PsbJ, PsbK, PsbL, PsbM, PsbT, PsbX, PsbY, PsbZ, Psb30/Ycf12, peripheral proteins PsbO, CyanoQ (PsbQ), PsbU, PsbV and a large number of cofactors. It forms dimeric complexes.</text>
</comment>
<comment type="subcellular location">
    <subcellularLocation>
        <location evidence="1">Cellular thylakoid membrane</location>
        <topology evidence="1">Multi-pass membrane protein</topology>
    </subcellularLocation>
</comment>
<comment type="PTM">
    <text evidence="1">Tyr-161 forms a radical intermediate that is referred to as redox-active TyrZ, YZ or Y-Z.</text>
</comment>
<comment type="PTM">
    <text evidence="1">C-terminally processed by CtpA; processing is essential to allow assembly of the oxygen-evolving complex and thus photosynthetic growth.</text>
</comment>
<comment type="miscellaneous">
    <text evidence="1">Cyanobacteria usually contain more than 2 copies of the psbA gene.</text>
</comment>
<comment type="miscellaneous">
    <text evidence="1">2 of the reaction center chlorophylls (ChlD1 and ChlD2) are entirely coordinated by water.</text>
</comment>
<comment type="miscellaneous">
    <text evidence="1">Herbicides such as atrazine, BNT, diuron or ioxynil bind in the Q(B) binding site and block subsequent electron transfer.</text>
</comment>
<comment type="similarity">
    <text evidence="1">Belongs to the reaction center PufL/M/PsbA/D family.</text>
</comment>
<dbReference type="EC" id="1.10.3.9" evidence="1"/>
<dbReference type="EMBL" id="CT971583">
    <property type="protein sequence ID" value="CAK22792.1"/>
    <property type="molecule type" value="Genomic_DNA"/>
</dbReference>
<dbReference type="EMBL" id="CT971583">
    <property type="protein sequence ID" value="CAK23216.1"/>
    <property type="molecule type" value="Genomic_DNA"/>
</dbReference>
<dbReference type="EMBL" id="CT971583">
    <property type="protein sequence ID" value="CAK24510.1"/>
    <property type="molecule type" value="Genomic_DNA"/>
</dbReference>
<dbReference type="SMR" id="A5GIM7"/>
<dbReference type="STRING" id="32051.SynWH7803_0366"/>
<dbReference type="KEGG" id="syx:SynWH7803_0366"/>
<dbReference type="KEGG" id="syx:SynWH7803_0790"/>
<dbReference type="KEGG" id="syx:SynWH7803_2084"/>
<dbReference type="eggNOG" id="ENOG502Z87P">
    <property type="taxonomic scope" value="Bacteria"/>
</dbReference>
<dbReference type="HOGENOM" id="CLU_054206_1_0_3"/>
<dbReference type="OrthoDB" id="505356at2"/>
<dbReference type="Proteomes" id="UP000001566">
    <property type="component" value="Chromosome"/>
</dbReference>
<dbReference type="GO" id="GO:0009523">
    <property type="term" value="C:photosystem II"/>
    <property type="evidence" value="ECO:0007669"/>
    <property type="project" value="UniProtKB-KW"/>
</dbReference>
<dbReference type="GO" id="GO:0031676">
    <property type="term" value="C:plasma membrane-derived thylakoid membrane"/>
    <property type="evidence" value="ECO:0007669"/>
    <property type="project" value="UniProtKB-SubCell"/>
</dbReference>
<dbReference type="GO" id="GO:0016168">
    <property type="term" value="F:chlorophyll binding"/>
    <property type="evidence" value="ECO:0007669"/>
    <property type="project" value="UniProtKB-UniRule"/>
</dbReference>
<dbReference type="GO" id="GO:0045156">
    <property type="term" value="F:electron transporter, transferring electrons within the cyclic electron transport pathway of photosynthesis activity"/>
    <property type="evidence" value="ECO:0007669"/>
    <property type="project" value="InterPro"/>
</dbReference>
<dbReference type="GO" id="GO:0005506">
    <property type="term" value="F:iron ion binding"/>
    <property type="evidence" value="ECO:0007669"/>
    <property type="project" value="UniProtKB-UniRule"/>
</dbReference>
<dbReference type="GO" id="GO:0016682">
    <property type="term" value="F:oxidoreductase activity, acting on diphenols and related substances as donors, oxygen as acceptor"/>
    <property type="evidence" value="ECO:0007669"/>
    <property type="project" value="UniProtKB-UniRule"/>
</dbReference>
<dbReference type="GO" id="GO:0010242">
    <property type="term" value="F:oxygen evolving activity"/>
    <property type="evidence" value="ECO:0007669"/>
    <property type="project" value="UniProtKB-EC"/>
</dbReference>
<dbReference type="GO" id="GO:0009772">
    <property type="term" value="P:photosynthetic electron transport in photosystem II"/>
    <property type="evidence" value="ECO:0007669"/>
    <property type="project" value="InterPro"/>
</dbReference>
<dbReference type="GO" id="GO:0009635">
    <property type="term" value="P:response to herbicide"/>
    <property type="evidence" value="ECO:0007669"/>
    <property type="project" value="UniProtKB-KW"/>
</dbReference>
<dbReference type="FunFam" id="1.20.85.10:FF:000002">
    <property type="entry name" value="Photosystem II protein D1"/>
    <property type="match status" value="1"/>
</dbReference>
<dbReference type="Gene3D" id="1.20.85.10">
    <property type="entry name" value="Photosystem II protein D1-like"/>
    <property type="match status" value="1"/>
</dbReference>
<dbReference type="HAMAP" id="MF_01379">
    <property type="entry name" value="PSII_PsbA_D1"/>
    <property type="match status" value="1"/>
</dbReference>
<dbReference type="InterPro" id="IPR055266">
    <property type="entry name" value="D1/D2"/>
</dbReference>
<dbReference type="InterPro" id="IPR036854">
    <property type="entry name" value="Photo_II_D1/D2_sf"/>
</dbReference>
<dbReference type="InterPro" id="IPR000484">
    <property type="entry name" value="Photo_RC_L/M"/>
</dbReference>
<dbReference type="InterPro" id="IPR055265">
    <property type="entry name" value="Photo_RC_L/M_CS"/>
</dbReference>
<dbReference type="InterPro" id="IPR005867">
    <property type="entry name" value="PSII_D1"/>
</dbReference>
<dbReference type="NCBIfam" id="TIGR01151">
    <property type="entry name" value="psbA"/>
    <property type="match status" value="1"/>
</dbReference>
<dbReference type="PANTHER" id="PTHR33149:SF12">
    <property type="entry name" value="PHOTOSYSTEM II D2 PROTEIN"/>
    <property type="match status" value="1"/>
</dbReference>
<dbReference type="PANTHER" id="PTHR33149">
    <property type="entry name" value="PHOTOSYSTEM II PROTEIN D1"/>
    <property type="match status" value="1"/>
</dbReference>
<dbReference type="Pfam" id="PF00124">
    <property type="entry name" value="Photo_RC"/>
    <property type="match status" value="1"/>
</dbReference>
<dbReference type="PRINTS" id="PR00256">
    <property type="entry name" value="REACTNCENTRE"/>
</dbReference>
<dbReference type="SUPFAM" id="SSF81483">
    <property type="entry name" value="Bacterial photosystem II reaction centre, L and M subunits"/>
    <property type="match status" value="1"/>
</dbReference>
<dbReference type="PROSITE" id="PS00244">
    <property type="entry name" value="REACTION_CENTER"/>
    <property type="match status" value="1"/>
</dbReference>
<gene>
    <name evidence="1 2" type="primary">psbA1</name>
    <name type="ordered locus">SynWH7803_0366</name>
</gene>
<gene>
    <name evidence="1 2" type="primary">psbA3</name>
    <name type="ordered locus">SynWH7803_0790</name>
</gene>
<gene>
    <name evidence="1 2" type="primary">psbA4</name>
    <name type="ordered locus">SynWH7803_2084</name>
</gene>
<organism>
    <name type="scientific">Synechococcus sp. (strain WH7803)</name>
    <dbReference type="NCBI Taxonomy" id="32051"/>
    <lineage>
        <taxon>Bacteria</taxon>
        <taxon>Bacillati</taxon>
        <taxon>Cyanobacteriota</taxon>
        <taxon>Cyanophyceae</taxon>
        <taxon>Synechococcales</taxon>
        <taxon>Synechococcaceae</taxon>
        <taxon>Synechococcus</taxon>
    </lineage>
</organism>
<evidence type="ECO:0000255" key="1">
    <source>
        <dbReference type="HAMAP-Rule" id="MF_01379"/>
    </source>
</evidence>
<evidence type="ECO:0000305" key="2"/>
<feature type="chain" id="PRO_0000316416" description="Photosystem II protein D1 1" evidence="1">
    <location>
        <begin position="1"/>
        <end position="344"/>
    </location>
</feature>
<feature type="propeptide" id="PRO_0000316417" evidence="1">
    <location>
        <begin position="345"/>
        <end position="359"/>
    </location>
</feature>
<feature type="transmembrane region" description="Helical" evidence="1">
    <location>
        <begin position="29"/>
        <end position="46"/>
    </location>
</feature>
<feature type="transmembrane region" description="Helical" evidence="1">
    <location>
        <begin position="118"/>
        <end position="133"/>
    </location>
</feature>
<feature type="transmembrane region" description="Helical" evidence="1">
    <location>
        <begin position="142"/>
        <end position="156"/>
    </location>
</feature>
<feature type="transmembrane region" description="Helical" evidence="1">
    <location>
        <begin position="197"/>
        <end position="218"/>
    </location>
</feature>
<feature type="transmembrane region" description="Helical" evidence="1">
    <location>
        <begin position="274"/>
        <end position="288"/>
    </location>
</feature>
<feature type="binding site" description="axial binding residue" evidence="1">
    <location>
        <position position="118"/>
    </location>
    <ligand>
        <name>chlorophyll a</name>
        <dbReference type="ChEBI" id="CHEBI:58416"/>
        <label>ChlzD1</label>
    </ligand>
    <ligandPart>
        <name>Mg</name>
        <dbReference type="ChEBI" id="CHEBI:25107"/>
    </ligandPart>
</feature>
<feature type="binding site" evidence="1">
    <location>
        <position position="126"/>
    </location>
    <ligand>
        <name>pheophytin a</name>
        <dbReference type="ChEBI" id="CHEBI:136840"/>
        <label>D1</label>
    </ligand>
</feature>
<feature type="binding site" evidence="1">
    <location>
        <position position="170"/>
    </location>
    <ligand>
        <name>[CaMn4O5] cluster</name>
        <dbReference type="ChEBI" id="CHEBI:189552"/>
    </ligand>
</feature>
<feature type="binding site" evidence="1">
    <location>
        <position position="189"/>
    </location>
    <ligand>
        <name>[CaMn4O5] cluster</name>
        <dbReference type="ChEBI" id="CHEBI:189552"/>
    </ligand>
</feature>
<feature type="binding site" description="axial binding residue" evidence="1">
    <location>
        <position position="198"/>
    </location>
    <ligand>
        <name>chlorophyll a</name>
        <dbReference type="ChEBI" id="CHEBI:58416"/>
        <label>PD1</label>
    </ligand>
    <ligandPart>
        <name>Mg</name>
        <dbReference type="ChEBI" id="CHEBI:25107"/>
    </ligandPart>
</feature>
<feature type="binding site" evidence="1">
    <location>
        <position position="215"/>
    </location>
    <ligand>
        <name>a quinone</name>
        <dbReference type="ChEBI" id="CHEBI:132124"/>
        <label>B</label>
    </ligand>
</feature>
<feature type="binding site" evidence="1">
    <location>
        <position position="215"/>
    </location>
    <ligand>
        <name>Fe cation</name>
        <dbReference type="ChEBI" id="CHEBI:24875"/>
        <note>ligand shared with heterodimeric partner</note>
    </ligand>
</feature>
<feature type="binding site" evidence="1">
    <location>
        <begin position="264"/>
        <end position="265"/>
    </location>
    <ligand>
        <name>a quinone</name>
        <dbReference type="ChEBI" id="CHEBI:132124"/>
        <label>B</label>
    </ligand>
</feature>
<feature type="binding site" evidence="1">
    <location>
        <position position="272"/>
    </location>
    <ligand>
        <name>Fe cation</name>
        <dbReference type="ChEBI" id="CHEBI:24875"/>
        <note>ligand shared with heterodimeric partner</note>
    </ligand>
</feature>
<feature type="binding site" evidence="1">
    <location>
        <position position="332"/>
    </location>
    <ligand>
        <name>[CaMn4O5] cluster</name>
        <dbReference type="ChEBI" id="CHEBI:189552"/>
    </ligand>
</feature>
<feature type="binding site" evidence="1">
    <location>
        <position position="333"/>
    </location>
    <ligand>
        <name>[CaMn4O5] cluster</name>
        <dbReference type="ChEBI" id="CHEBI:189552"/>
    </ligand>
</feature>
<feature type="binding site" evidence="1">
    <location>
        <position position="342"/>
    </location>
    <ligand>
        <name>[CaMn4O5] cluster</name>
        <dbReference type="ChEBI" id="CHEBI:189552"/>
    </ligand>
</feature>
<feature type="binding site" evidence="1">
    <location>
        <position position="344"/>
    </location>
    <ligand>
        <name>[CaMn4O5] cluster</name>
        <dbReference type="ChEBI" id="CHEBI:189552"/>
    </ligand>
</feature>
<feature type="site" description="Tyrosine radical intermediate" evidence="1">
    <location>
        <position position="161"/>
    </location>
</feature>
<feature type="site" description="Stabilizes free radical intermediate" evidence="1">
    <location>
        <position position="190"/>
    </location>
</feature>
<feature type="site" description="Cleavage; by CtpA" evidence="1">
    <location>
        <begin position="344"/>
        <end position="345"/>
    </location>
</feature>
<protein>
    <recommendedName>
        <fullName evidence="1">Photosystem II protein D1 1</fullName>
        <shortName evidence="1">PSII D1 protein 1</shortName>
        <ecNumber evidence="1">1.10.3.9</ecNumber>
    </recommendedName>
    <alternativeName>
        <fullName evidence="1">Photosystem II Q(B) protein 1</fullName>
    </alternativeName>
</protein>
<name>PSBA1_SYNPW</name>
<proteinExistence type="inferred from homology"/>